<sequence>MPGIKVREGDAFDEAYRRFKKQTDRNLVVTECRARRFFESKTEKRKKQKISAKKKVLKRLYMLRRYESRL</sequence>
<protein>
    <recommendedName>
        <fullName evidence="1">Small ribosomal subunit protein bS21</fullName>
    </recommendedName>
    <alternativeName>
        <fullName evidence="2">30S ribosomal protein S21</fullName>
    </alternativeName>
</protein>
<feature type="chain" id="PRO_0000266690" description="Small ribosomal subunit protein bS21">
    <location>
        <begin position="1"/>
        <end position="70"/>
    </location>
</feature>
<organism>
    <name type="scientific">Helicobacter pylori (strain HPAG1)</name>
    <dbReference type="NCBI Taxonomy" id="357544"/>
    <lineage>
        <taxon>Bacteria</taxon>
        <taxon>Pseudomonadati</taxon>
        <taxon>Campylobacterota</taxon>
        <taxon>Epsilonproteobacteria</taxon>
        <taxon>Campylobacterales</taxon>
        <taxon>Helicobacteraceae</taxon>
        <taxon>Helicobacter</taxon>
    </lineage>
</organism>
<reference key="1">
    <citation type="journal article" date="2006" name="Proc. Natl. Acad. Sci. U.S.A.">
        <title>The complete genome sequence of a chronic atrophic gastritis Helicobacter pylori strain: evolution during disease progression.</title>
        <authorList>
            <person name="Oh J.D."/>
            <person name="Kling-Baeckhed H."/>
            <person name="Giannakis M."/>
            <person name="Xu J."/>
            <person name="Fulton R.S."/>
            <person name="Fulton L.A."/>
            <person name="Cordum H.S."/>
            <person name="Wang C."/>
            <person name="Elliott G."/>
            <person name="Edwards J."/>
            <person name="Mardis E.R."/>
            <person name="Engstrand L.G."/>
            <person name="Gordon J.I."/>
        </authorList>
    </citation>
    <scope>NUCLEOTIDE SEQUENCE [LARGE SCALE GENOMIC DNA]</scope>
    <source>
        <strain>HPAG1</strain>
    </source>
</reference>
<name>RS21_HELPH</name>
<dbReference type="EMBL" id="CP000241">
    <property type="protein sequence ID" value="ABF84608.1"/>
    <property type="molecule type" value="Genomic_DNA"/>
</dbReference>
<dbReference type="RefSeq" id="WP_001117778.1">
    <property type="nucleotide sequence ID" value="NC_008086.1"/>
</dbReference>
<dbReference type="SMR" id="Q1CTW4"/>
<dbReference type="KEGG" id="hpa:HPAG1_0541"/>
<dbReference type="HOGENOM" id="CLU_159258_1_1_7"/>
<dbReference type="GO" id="GO:1990904">
    <property type="term" value="C:ribonucleoprotein complex"/>
    <property type="evidence" value="ECO:0007669"/>
    <property type="project" value="UniProtKB-KW"/>
</dbReference>
<dbReference type="GO" id="GO:0005840">
    <property type="term" value="C:ribosome"/>
    <property type="evidence" value="ECO:0007669"/>
    <property type="project" value="UniProtKB-KW"/>
</dbReference>
<dbReference type="GO" id="GO:0003735">
    <property type="term" value="F:structural constituent of ribosome"/>
    <property type="evidence" value="ECO:0007669"/>
    <property type="project" value="InterPro"/>
</dbReference>
<dbReference type="GO" id="GO:0006412">
    <property type="term" value="P:translation"/>
    <property type="evidence" value="ECO:0007669"/>
    <property type="project" value="UniProtKB-UniRule"/>
</dbReference>
<dbReference type="Gene3D" id="1.20.5.1150">
    <property type="entry name" value="Ribosomal protein S8"/>
    <property type="match status" value="1"/>
</dbReference>
<dbReference type="HAMAP" id="MF_00358">
    <property type="entry name" value="Ribosomal_bS21"/>
    <property type="match status" value="1"/>
</dbReference>
<dbReference type="InterPro" id="IPR001911">
    <property type="entry name" value="Ribosomal_bS21"/>
</dbReference>
<dbReference type="InterPro" id="IPR018278">
    <property type="entry name" value="Ribosomal_bS21_CS"/>
</dbReference>
<dbReference type="InterPro" id="IPR038380">
    <property type="entry name" value="Ribosomal_bS21_sf"/>
</dbReference>
<dbReference type="NCBIfam" id="TIGR00030">
    <property type="entry name" value="S21p"/>
    <property type="match status" value="1"/>
</dbReference>
<dbReference type="Pfam" id="PF01165">
    <property type="entry name" value="Ribosomal_S21"/>
    <property type="match status" value="1"/>
</dbReference>
<dbReference type="PRINTS" id="PR00976">
    <property type="entry name" value="RIBOSOMALS21"/>
</dbReference>
<dbReference type="PROSITE" id="PS01181">
    <property type="entry name" value="RIBOSOMAL_S21"/>
    <property type="match status" value="1"/>
</dbReference>
<evidence type="ECO:0000255" key="1">
    <source>
        <dbReference type="HAMAP-Rule" id="MF_00358"/>
    </source>
</evidence>
<evidence type="ECO:0000305" key="2"/>
<accession>Q1CTW4</accession>
<comment type="similarity">
    <text evidence="1">Belongs to the bacterial ribosomal protein bS21 family.</text>
</comment>
<keyword id="KW-0687">Ribonucleoprotein</keyword>
<keyword id="KW-0689">Ribosomal protein</keyword>
<proteinExistence type="inferred from homology"/>
<gene>
    <name evidence="1" type="primary">rpsU</name>
    <name type="ordered locus">HPAG1_0541</name>
</gene>